<evidence type="ECO:0000255" key="1">
    <source>
        <dbReference type="HAMAP-Rule" id="MF_00214"/>
    </source>
</evidence>
<feature type="chain" id="PRO_0000138817" description="3-dehydroquinate dehydratase">
    <location>
        <begin position="1"/>
        <end position="225"/>
    </location>
</feature>
<feature type="active site" description="Proton donor/acceptor" evidence="1">
    <location>
        <position position="118"/>
    </location>
</feature>
<feature type="active site" description="Schiff-base intermediate with substrate" evidence="1">
    <location>
        <position position="143"/>
    </location>
</feature>
<feature type="binding site" evidence="1">
    <location>
        <position position="6"/>
    </location>
    <ligand>
        <name>3-dehydroquinate</name>
        <dbReference type="ChEBI" id="CHEBI:32364"/>
    </ligand>
</feature>
<feature type="binding site" evidence="1">
    <location>
        <begin position="30"/>
        <end position="32"/>
    </location>
    <ligand>
        <name>3-dehydroquinate</name>
        <dbReference type="ChEBI" id="CHEBI:32364"/>
    </ligand>
</feature>
<feature type="binding site" evidence="1">
    <location>
        <position position="62"/>
    </location>
    <ligand>
        <name>3-dehydroquinate</name>
        <dbReference type="ChEBI" id="CHEBI:32364"/>
    </ligand>
</feature>
<feature type="binding site" evidence="1">
    <location>
        <position position="186"/>
    </location>
    <ligand>
        <name>3-dehydroquinate</name>
        <dbReference type="ChEBI" id="CHEBI:32364"/>
    </ligand>
</feature>
<feature type="binding site" evidence="1">
    <location>
        <position position="205"/>
    </location>
    <ligand>
        <name>3-dehydroquinate</name>
        <dbReference type="ChEBI" id="CHEBI:32364"/>
    </ligand>
</feature>
<feature type="binding site" evidence="1">
    <location>
        <position position="209"/>
    </location>
    <ligand>
        <name>3-dehydroquinate</name>
        <dbReference type="ChEBI" id="CHEBI:32364"/>
    </ligand>
</feature>
<dbReference type="EC" id="4.2.1.10" evidence="1"/>
<dbReference type="EMBL" id="AE007317">
    <property type="protein sequence ID" value="AAL00039.1"/>
    <property type="molecule type" value="Genomic_DNA"/>
</dbReference>
<dbReference type="PIR" id="B98026">
    <property type="entry name" value="B98026"/>
</dbReference>
<dbReference type="RefSeq" id="NP_358828.1">
    <property type="nucleotide sequence ID" value="NC_003098.1"/>
</dbReference>
<dbReference type="RefSeq" id="WP_000767762.1">
    <property type="nucleotide sequence ID" value="NC_003098.1"/>
</dbReference>
<dbReference type="SMR" id="P63589"/>
<dbReference type="STRING" id="171101.spr1235"/>
<dbReference type="GeneID" id="45653363"/>
<dbReference type="KEGG" id="spr:spr1235"/>
<dbReference type="PATRIC" id="fig|171101.6.peg.1341"/>
<dbReference type="eggNOG" id="COG0710">
    <property type="taxonomic scope" value="Bacteria"/>
</dbReference>
<dbReference type="HOGENOM" id="CLU_064444_0_0_9"/>
<dbReference type="UniPathway" id="UPA00053">
    <property type="reaction ID" value="UER00086"/>
</dbReference>
<dbReference type="Proteomes" id="UP000000586">
    <property type="component" value="Chromosome"/>
</dbReference>
<dbReference type="GO" id="GO:0003855">
    <property type="term" value="F:3-dehydroquinate dehydratase activity"/>
    <property type="evidence" value="ECO:0000318"/>
    <property type="project" value="GO_Central"/>
</dbReference>
<dbReference type="GO" id="GO:0046279">
    <property type="term" value="P:3,4-dihydroxybenzoate biosynthetic process"/>
    <property type="evidence" value="ECO:0000318"/>
    <property type="project" value="GO_Central"/>
</dbReference>
<dbReference type="GO" id="GO:0008652">
    <property type="term" value="P:amino acid biosynthetic process"/>
    <property type="evidence" value="ECO:0007669"/>
    <property type="project" value="UniProtKB-KW"/>
</dbReference>
<dbReference type="GO" id="GO:0009073">
    <property type="term" value="P:aromatic amino acid family biosynthetic process"/>
    <property type="evidence" value="ECO:0007669"/>
    <property type="project" value="UniProtKB-KW"/>
</dbReference>
<dbReference type="GO" id="GO:0009423">
    <property type="term" value="P:chorismate biosynthetic process"/>
    <property type="evidence" value="ECO:0007669"/>
    <property type="project" value="UniProtKB-UniRule"/>
</dbReference>
<dbReference type="CDD" id="cd00502">
    <property type="entry name" value="DHQase_I"/>
    <property type="match status" value="1"/>
</dbReference>
<dbReference type="FunFam" id="3.20.20.70:FF:000217">
    <property type="entry name" value="3-dehydroquinate dehydratase"/>
    <property type="match status" value="1"/>
</dbReference>
<dbReference type="Gene3D" id="3.20.20.70">
    <property type="entry name" value="Aldolase class I"/>
    <property type="match status" value="1"/>
</dbReference>
<dbReference type="HAMAP" id="MF_00214">
    <property type="entry name" value="AroD"/>
    <property type="match status" value="1"/>
</dbReference>
<dbReference type="InterPro" id="IPR013785">
    <property type="entry name" value="Aldolase_TIM"/>
</dbReference>
<dbReference type="InterPro" id="IPR001381">
    <property type="entry name" value="DHquinase_I"/>
</dbReference>
<dbReference type="InterPro" id="IPR050146">
    <property type="entry name" value="Type-I_3-dehydroquinase"/>
</dbReference>
<dbReference type="NCBIfam" id="TIGR01093">
    <property type="entry name" value="aroD"/>
    <property type="match status" value="1"/>
</dbReference>
<dbReference type="PANTHER" id="PTHR43699">
    <property type="entry name" value="3-DEHYDROQUINATE DEHYDRATASE"/>
    <property type="match status" value="1"/>
</dbReference>
<dbReference type="PANTHER" id="PTHR43699:SF1">
    <property type="entry name" value="3-DEHYDROQUINATE DEHYDRATASE"/>
    <property type="match status" value="1"/>
</dbReference>
<dbReference type="Pfam" id="PF01487">
    <property type="entry name" value="DHquinase_I"/>
    <property type="match status" value="1"/>
</dbReference>
<dbReference type="SUPFAM" id="SSF51569">
    <property type="entry name" value="Aldolase"/>
    <property type="match status" value="1"/>
</dbReference>
<accession>P63589</accession>
<accession>Q97Q54</accession>
<reference key="1">
    <citation type="journal article" date="2001" name="J. Bacteriol.">
        <title>Genome of the bacterium Streptococcus pneumoniae strain R6.</title>
        <authorList>
            <person name="Hoskins J."/>
            <person name="Alborn W.E. Jr."/>
            <person name="Arnold J."/>
            <person name="Blaszczak L.C."/>
            <person name="Burgett S."/>
            <person name="DeHoff B.S."/>
            <person name="Estrem S.T."/>
            <person name="Fritz L."/>
            <person name="Fu D.-J."/>
            <person name="Fuller W."/>
            <person name="Geringer C."/>
            <person name="Gilmour R."/>
            <person name="Glass J.S."/>
            <person name="Khoja H."/>
            <person name="Kraft A.R."/>
            <person name="Lagace R.E."/>
            <person name="LeBlanc D.J."/>
            <person name="Lee L.N."/>
            <person name="Lefkowitz E.J."/>
            <person name="Lu J."/>
            <person name="Matsushima P."/>
            <person name="McAhren S.M."/>
            <person name="McHenney M."/>
            <person name="McLeaster K."/>
            <person name="Mundy C.W."/>
            <person name="Nicas T.I."/>
            <person name="Norris F.H."/>
            <person name="O'Gara M."/>
            <person name="Peery R.B."/>
            <person name="Robertson G.T."/>
            <person name="Rockey P."/>
            <person name="Sun P.-M."/>
            <person name="Winkler M.E."/>
            <person name="Yang Y."/>
            <person name="Young-Bellido M."/>
            <person name="Zhao G."/>
            <person name="Zook C.A."/>
            <person name="Baltz R.H."/>
            <person name="Jaskunas S.R."/>
            <person name="Rosteck P.R. Jr."/>
            <person name="Skatrud P.L."/>
            <person name="Glass J.I."/>
        </authorList>
    </citation>
    <scope>NUCLEOTIDE SEQUENCE [LARGE SCALE GENOMIC DNA]</scope>
    <source>
        <strain>ATCC BAA-255 / R6</strain>
    </source>
</reference>
<protein>
    <recommendedName>
        <fullName evidence="1">3-dehydroquinate dehydratase</fullName>
        <shortName evidence="1">3-dehydroquinase</shortName>
        <ecNumber evidence="1">4.2.1.10</ecNumber>
    </recommendedName>
    <alternativeName>
        <fullName evidence="1">Type I DHQase</fullName>
    </alternativeName>
    <alternativeName>
        <fullName evidence="1">Type I dehydroquinase</fullName>
        <shortName evidence="1">DHQ1</shortName>
    </alternativeName>
</protein>
<proteinExistence type="inferred from homology"/>
<gene>
    <name evidence="1" type="primary">aroD</name>
    <name type="ordered locus">spr1235</name>
</gene>
<comment type="function">
    <text evidence="1">Involved in the third step of the chorismate pathway, which leads to the biosynthesis of aromatic amino acids. Catalyzes the cis-dehydration of 3-dehydroquinate (DHQ) and introduces the first double bond of the aromatic ring to yield 3-dehydroshikimate.</text>
</comment>
<comment type="catalytic activity">
    <reaction evidence="1">
        <text>3-dehydroquinate = 3-dehydroshikimate + H2O</text>
        <dbReference type="Rhea" id="RHEA:21096"/>
        <dbReference type="ChEBI" id="CHEBI:15377"/>
        <dbReference type="ChEBI" id="CHEBI:16630"/>
        <dbReference type="ChEBI" id="CHEBI:32364"/>
        <dbReference type="EC" id="4.2.1.10"/>
    </reaction>
</comment>
<comment type="pathway">
    <text evidence="1">Metabolic intermediate biosynthesis; chorismate biosynthesis; chorismate from D-erythrose 4-phosphate and phosphoenolpyruvate: step 3/7.</text>
</comment>
<comment type="subunit">
    <text evidence="1">Homodimer.</text>
</comment>
<comment type="similarity">
    <text evidence="1">Belongs to the type-I 3-dehydroquinase family.</text>
</comment>
<sequence>MKLIVSVMPRSLEEAQALDATRYLDADIIEWRADYLPKEAILQVAPAIFEKFAGRELVFTLRTRSEGGEIDLSPEEYIHLIKEVAQLYQPDYIDFEYYSYKDVFEEMLDFPNLVLSYHNFQETPENMMEILSELTILNPKLVKVAVMAHTEQDVLDLMNYTRGFKTLNPEQEYVTISMGKVGKVSRITADVTGSSWSFASLDEVSAPGQISLASMKKIREILDEA</sequence>
<organism>
    <name type="scientific">Streptococcus pneumoniae (strain ATCC BAA-255 / R6)</name>
    <dbReference type="NCBI Taxonomy" id="171101"/>
    <lineage>
        <taxon>Bacteria</taxon>
        <taxon>Bacillati</taxon>
        <taxon>Bacillota</taxon>
        <taxon>Bacilli</taxon>
        <taxon>Lactobacillales</taxon>
        <taxon>Streptococcaceae</taxon>
        <taxon>Streptococcus</taxon>
    </lineage>
</organism>
<name>AROD_STRR6</name>
<keyword id="KW-0028">Amino-acid biosynthesis</keyword>
<keyword id="KW-0057">Aromatic amino acid biosynthesis</keyword>
<keyword id="KW-0456">Lyase</keyword>
<keyword id="KW-1185">Reference proteome</keyword>
<keyword id="KW-0704">Schiff base</keyword>